<gene>
    <name evidence="1" type="primary">rplL</name>
    <name type="ordered locus">FTA_1849</name>
</gene>
<accession>A7NEC1</accession>
<feature type="chain" id="PRO_1000007008" description="Large ribosomal subunit protein bL12">
    <location>
        <begin position="1"/>
        <end position="125"/>
    </location>
</feature>
<proteinExistence type="inferred from homology"/>
<name>RL7_FRATF</name>
<keyword id="KW-0687">Ribonucleoprotein</keyword>
<keyword id="KW-0689">Ribosomal protein</keyword>
<organism>
    <name type="scientific">Francisella tularensis subsp. holarctica (strain FTNF002-00 / FTA)</name>
    <dbReference type="NCBI Taxonomy" id="458234"/>
    <lineage>
        <taxon>Bacteria</taxon>
        <taxon>Pseudomonadati</taxon>
        <taxon>Pseudomonadota</taxon>
        <taxon>Gammaproteobacteria</taxon>
        <taxon>Thiotrichales</taxon>
        <taxon>Francisellaceae</taxon>
        <taxon>Francisella</taxon>
    </lineage>
</organism>
<dbReference type="EMBL" id="CP000803">
    <property type="protein sequence ID" value="ABU62324.1"/>
    <property type="molecule type" value="Genomic_DNA"/>
</dbReference>
<dbReference type="RefSeq" id="WP_003017229.1">
    <property type="nucleotide sequence ID" value="NC_009749.1"/>
</dbReference>
<dbReference type="SMR" id="A7NEC1"/>
<dbReference type="KEGG" id="fta:FTA_1849"/>
<dbReference type="HOGENOM" id="CLU_086499_3_2_6"/>
<dbReference type="GO" id="GO:0022625">
    <property type="term" value="C:cytosolic large ribosomal subunit"/>
    <property type="evidence" value="ECO:0007669"/>
    <property type="project" value="TreeGrafter"/>
</dbReference>
<dbReference type="GO" id="GO:0003729">
    <property type="term" value="F:mRNA binding"/>
    <property type="evidence" value="ECO:0007669"/>
    <property type="project" value="TreeGrafter"/>
</dbReference>
<dbReference type="GO" id="GO:0003735">
    <property type="term" value="F:structural constituent of ribosome"/>
    <property type="evidence" value="ECO:0007669"/>
    <property type="project" value="InterPro"/>
</dbReference>
<dbReference type="GO" id="GO:0006412">
    <property type="term" value="P:translation"/>
    <property type="evidence" value="ECO:0007669"/>
    <property type="project" value="UniProtKB-UniRule"/>
</dbReference>
<dbReference type="CDD" id="cd00387">
    <property type="entry name" value="Ribosomal_L7_L12"/>
    <property type="match status" value="1"/>
</dbReference>
<dbReference type="FunFam" id="3.30.1390.10:FF:000001">
    <property type="entry name" value="50S ribosomal protein L7/L12"/>
    <property type="match status" value="1"/>
</dbReference>
<dbReference type="Gene3D" id="3.30.1390.10">
    <property type="match status" value="1"/>
</dbReference>
<dbReference type="Gene3D" id="1.20.5.710">
    <property type="entry name" value="Single helix bin"/>
    <property type="match status" value="1"/>
</dbReference>
<dbReference type="HAMAP" id="MF_00368">
    <property type="entry name" value="Ribosomal_bL12"/>
    <property type="match status" value="1"/>
</dbReference>
<dbReference type="InterPro" id="IPR000206">
    <property type="entry name" value="Ribosomal_bL12"/>
</dbReference>
<dbReference type="InterPro" id="IPR013823">
    <property type="entry name" value="Ribosomal_bL12_C"/>
</dbReference>
<dbReference type="InterPro" id="IPR014719">
    <property type="entry name" value="Ribosomal_bL12_C/ClpS-like"/>
</dbReference>
<dbReference type="InterPro" id="IPR008932">
    <property type="entry name" value="Ribosomal_bL12_oligo"/>
</dbReference>
<dbReference type="InterPro" id="IPR036235">
    <property type="entry name" value="Ribosomal_bL12_oligo_N_sf"/>
</dbReference>
<dbReference type="NCBIfam" id="TIGR00855">
    <property type="entry name" value="L12"/>
    <property type="match status" value="1"/>
</dbReference>
<dbReference type="PANTHER" id="PTHR45987">
    <property type="entry name" value="39S RIBOSOMAL PROTEIN L12"/>
    <property type="match status" value="1"/>
</dbReference>
<dbReference type="PANTHER" id="PTHR45987:SF4">
    <property type="entry name" value="LARGE RIBOSOMAL SUBUNIT PROTEIN BL12M"/>
    <property type="match status" value="1"/>
</dbReference>
<dbReference type="Pfam" id="PF00542">
    <property type="entry name" value="Ribosomal_L12"/>
    <property type="match status" value="1"/>
</dbReference>
<dbReference type="Pfam" id="PF16320">
    <property type="entry name" value="Ribosomal_L12_N"/>
    <property type="match status" value="1"/>
</dbReference>
<dbReference type="SUPFAM" id="SSF54736">
    <property type="entry name" value="ClpS-like"/>
    <property type="match status" value="1"/>
</dbReference>
<dbReference type="SUPFAM" id="SSF48300">
    <property type="entry name" value="Ribosomal protein L7/12, oligomerisation (N-terminal) domain"/>
    <property type="match status" value="1"/>
</dbReference>
<reference key="1">
    <citation type="journal article" date="2009" name="PLoS ONE">
        <title>Complete genome sequence of Francisella tularensis subspecies holarctica FTNF002-00.</title>
        <authorList>
            <person name="Barabote R.D."/>
            <person name="Xie G."/>
            <person name="Brettin T.S."/>
            <person name="Hinrichs S.H."/>
            <person name="Fey P.D."/>
            <person name="Jay J.J."/>
            <person name="Engle J.L."/>
            <person name="Godbole S.D."/>
            <person name="Noronha J.M."/>
            <person name="Scheuermann R.H."/>
            <person name="Zhou L.W."/>
            <person name="Lion C."/>
            <person name="Dempsey M.P."/>
        </authorList>
    </citation>
    <scope>NUCLEOTIDE SEQUENCE [LARGE SCALE GENOMIC DNA]</scope>
    <source>
        <strain>FTNF002-00 / FTA</strain>
    </source>
</reference>
<evidence type="ECO:0000255" key="1">
    <source>
        <dbReference type="HAMAP-Rule" id="MF_00368"/>
    </source>
</evidence>
<evidence type="ECO:0000305" key="2"/>
<protein>
    <recommendedName>
        <fullName evidence="1">Large ribosomal subunit protein bL12</fullName>
    </recommendedName>
    <alternativeName>
        <fullName evidence="2">50S ribosomal protein L7/L12</fullName>
    </alternativeName>
</protein>
<comment type="function">
    <text evidence="1">Forms part of the ribosomal stalk which helps the ribosome interact with GTP-bound translation factors. Is thus essential for accurate translation.</text>
</comment>
<comment type="subunit">
    <text evidence="1">Homodimer. Part of the ribosomal stalk of the 50S ribosomal subunit. Forms a multimeric L10(L12)X complex, where L10 forms an elongated spine to which 2 to 4 L12 dimers bind in a sequential fashion. Binds GTP-bound translation factors.</text>
</comment>
<comment type="similarity">
    <text evidence="1">Belongs to the bacterial ribosomal protein bL12 family.</text>
</comment>
<sequence length="125" mass="12848">MAITKEDILNAVAEMSVMDVCDLVKMMEDKFGVSAAAAVAVAAGPVAGPVEAAEEKTEFDVVLVDAGSNKIAAIKAVRGATGLGLKEAKDAVEGTPFTVKEAASKEEAEALKKQLEEAGAKVELK</sequence>